<comment type="function">
    <text evidence="1">This is one of the proteins that bind and probably mediate the attachment of the 5S RNA into the large ribosomal subunit, where it forms part of the central protuberance.</text>
</comment>
<comment type="subunit">
    <text evidence="1">Part of the 50S ribosomal subunit. Contacts the 5S and 23S rRNAs.</text>
</comment>
<comment type="similarity">
    <text evidence="1">Belongs to the universal ribosomal protein uL18 family.</text>
</comment>
<proteinExistence type="inferred from homology"/>
<reference key="1">
    <citation type="journal article" date="2004" name="J. Bacteriol.">
        <title>Complete genome sequence of the genetically tractable hydrogenotrophic methanogen Methanococcus maripaludis.</title>
        <authorList>
            <person name="Hendrickson E.L."/>
            <person name="Kaul R."/>
            <person name="Zhou Y."/>
            <person name="Bovee D."/>
            <person name="Chapman P."/>
            <person name="Chung J."/>
            <person name="Conway de Macario E."/>
            <person name="Dodsworth J.A."/>
            <person name="Gillett W."/>
            <person name="Graham D.E."/>
            <person name="Hackett M."/>
            <person name="Haydock A.K."/>
            <person name="Kang A."/>
            <person name="Land M.L."/>
            <person name="Levy R."/>
            <person name="Lie T.J."/>
            <person name="Major T.A."/>
            <person name="Moore B.C."/>
            <person name="Porat I."/>
            <person name="Palmeiri A."/>
            <person name="Rouse G."/>
            <person name="Saenphimmachak C."/>
            <person name="Soell D."/>
            <person name="Van Dien S."/>
            <person name="Wang T."/>
            <person name="Whitman W.B."/>
            <person name="Xia Q."/>
            <person name="Zhang Y."/>
            <person name="Larimer F.W."/>
            <person name="Olson M.V."/>
            <person name="Leigh J.A."/>
        </authorList>
    </citation>
    <scope>NUCLEOTIDE SEQUENCE [LARGE SCALE GENOMIC DNA]</scope>
    <source>
        <strain>DSM 14266 / JCM 13030 / NBRC 101832 / S2 / LL</strain>
    </source>
</reference>
<organism>
    <name type="scientific">Methanococcus maripaludis (strain DSM 14266 / JCM 13030 / NBRC 101832 / S2 / LL)</name>
    <dbReference type="NCBI Taxonomy" id="267377"/>
    <lineage>
        <taxon>Archaea</taxon>
        <taxon>Methanobacteriati</taxon>
        <taxon>Methanobacteriota</taxon>
        <taxon>Methanomada group</taxon>
        <taxon>Methanococci</taxon>
        <taxon>Methanococcales</taxon>
        <taxon>Methanococcaceae</taxon>
        <taxon>Methanococcus</taxon>
    </lineage>
</organism>
<sequence length="193" mass="21409">MAMNAKFRVPFRRRREGKTDFRQRLGLLLSGKPRLVARKSLNNVTAQLMAYDEKGDVVLVSAHSKELVKMGYKGHCGNLPAAYLTGLLLGAKAVKEDVKEAVLDKGLHRATKGAAIFAVLKGALDAGMDIPHGDKIIADEERLNGTHVKNYAESLKEDADAYKKQFSKYLEKGLNPEDLPEHVEELKEKILNL</sequence>
<gene>
    <name evidence="1" type="primary">rpl18</name>
    <name type="ordered locus">MMP1418</name>
</gene>
<keyword id="KW-1185">Reference proteome</keyword>
<keyword id="KW-0687">Ribonucleoprotein</keyword>
<keyword id="KW-0689">Ribosomal protein</keyword>
<keyword id="KW-0694">RNA-binding</keyword>
<keyword id="KW-0699">rRNA-binding</keyword>
<protein>
    <recommendedName>
        <fullName evidence="1">Large ribosomal subunit protein uL18</fullName>
    </recommendedName>
    <alternativeName>
        <fullName evidence="2">50S ribosomal protein L18</fullName>
    </alternativeName>
</protein>
<name>RL18_METMP</name>
<accession>Q6LXD4</accession>
<feature type="chain" id="PRO_0000131407" description="Large ribosomal subunit protein uL18">
    <location>
        <begin position="1"/>
        <end position="193"/>
    </location>
</feature>
<dbReference type="EMBL" id="BX950229">
    <property type="protein sequence ID" value="CAF30974.1"/>
    <property type="molecule type" value="Genomic_DNA"/>
</dbReference>
<dbReference type="RefSeq" id="WP_011171362.1">
    <property type="nucleotide sequence ID" value="NC_005791.1"/>
</dbReference>
<dbReference type="SMR" id="Q6LXD4"/>
<dbReference type="STRING" id="267377.MMP1418"/>
<dbReference type="EnsemblBacteria" id="CAF30974">
    <property type="protein sequence ID" value="CAF30974"/>
    <property type="gene ID" value="MMP1418"/>
</dbReference>
<dbReference type="KEGG" id="mmp:MMP1418"/>
<dbReference type="PATRIC" id="fig|267377.15.peg.1454"/>
<dbReference type="eggNOG" id="arCOG04088">
    <property type="taxonomic scope" value="Archaea"/>
</dbReference>
<dbReference type="HOGENOM" id="CLU_056222_2_0_2"/>
<dbReference type="OrthoDB" id="8644at2157"/>
<dbReference type="Proteomes" id="UP000000590">
    <property type="component" value="Chromosome"/>
</dbReference>
<dbReference type="GO" id="GO:0022625">
    <property type="term" value="C:cytosolic large ribosomal subunit"/>
    <property type="evidence" value="ECO:0007669"/>
    <property type="project" value="TreeGrafter"/>
</dbReference>
<dbReference type="GO" id="GO:0008097">
    <property type="term" value="F:5S rRNA binding"/>
    <property type="evidence" value="ECO:0007669"/>
    <property type="project" value="InterPro"/>
</dbReference>
<dbReference type="GO" id="GO:0003735">
    <property type="term" value="F:structural constituent of ribosome"/>
    <property type="evidence" value="ECO:0007669"/>
    <property type="project" value="InterPro"/>
</dbReference>
<dbReference type="GO" id="GO:0000027">
    <property type="term" value="P:ribosomal large subunit assembly"/>
    <property type="evidence" value="ECO:0007669"/>
    <property type="project" value="TreeGrafter"/>
</dbReference>
<dbReference type="GO" id="GO:0006412">
    <property type="term" value="P:translation"/>
    <property type="evidence" value="ECO:0007669"/>
    <property type="project" value="UniProtKB-UniRule"/>
</dbReference>
<dbReference type="CDD" id="cd00432">
    <property type="entry name" value="Ribosomal_L18_L5e"/>
    <property type="match status" value="1"/>
</dbReference>
<dbReference type="Gene3D" id="3.30.420.100">
    <property type="match status" value="1"/>
</dbReference>
<dbReference type="HAMAP" id="MF_01337_A">
    <property type="entry name" value="Ribosomal_uL18_A"/>
    <property type="match status" value="1"/>
</dbReference>
<dbReference type="InterPro" id="IPR005485">
    <property type="entry name" value="Rbsml_uL18_euk"/>
</dbReference>
<dbReference type="NCBIfam" id="NF006342">
    <property type="entry name" value="PRK08569.1"/>
    <property type="match status" value="1"/>
</dbReference>
<dbReference type="PANTHER" id="PTHR23410:SF12">
    <property type="entry name" value="LARGE RIBOSOMAL SUBUNIT PROTEIN UL18"/>
    <property type="match status" value="1"/>
</dbReference>
<dbReference type="PANTHER" id="PTHR23410">
    <property type="entry name" value="RIBOSOMAL PROTEIN L5-RELATED"/>
    <property type="match status" value="1"/>
</dbReference>
<dbReference type="Pfam" id="PF17144">
    <property type="entry name" value="Ribosomal_L5e"/>
    <property type="match status" value="2"/>
</dbReference>
<dbReference type="SUPFAM" id="SSF53137">
    <property type="entry name" value="Translational machinery components"/>
    <property type="match status" value="1"/>
</dbReference>
<evidence type="ECO:0000255" key="1">
    <source>
        <dbReference type="HAMAP-Rule" id="MF_01337"/>
    </source>
</evidence>
<evidence type="ECO:0000305" key="2"/>